<keyword id="KW-0002">3D-structure</keyword>
<keyword id="KW-0025">Alternative splicing</keyword>
<keyword id="KW-0966">Cell projection</keyword>
<keyword id="KW-0175">Coiled coil</keyword>
<keyword id="KW-0963">Cytoplasm</keyword>
<keyword id="KW-0968">Cytoplasmic vesicle</keyword>
<keyword id="KW-0206">Cytoskeleton</keyword>
<keyword id="KW-0472">Membrane</keyword>
<keyword id="KW-0479">Metal-binding</keyword>
<keyword id="KW-0493">Microtubule</keyword>
<keyword id="KW-0597">Phosphoprotein</keyword>
<keyword id="KW-1185">Reference proteome</keyword>
<keyword id="KW-0677">Repeat</keyword>
<keyword id="KW-0813">Transport</keyword>
<keyword id="KW-0862">Zinc</keyword>
<keyword id="KW-0863">Zinc-finger</keyword>
<reference key="1">
    <citation type="submission" date="2005-02" db="EMBL/GenBank/DDBJ databases">
        <title>Prediction of the coding sequences of mouse homologues of KIAA gene. The complete nucleotide sequences of mouse KIAA-homologous cDNAs identified by screening of terminal sequences of cDNA clones randomly sampled from size-fractionated libraries.</title>
        <authorList>
            <person name="Okazaki N."/>
            <person name="Kikuno R.F."/>
            <person name="Ohara R."/>
            <person name="Inamoto S."/>
            <person name="Koseki H."/>
            <person name="Hiraoka S."/>
            <person name="Saga Y."/>
            <person name="Nagase T."/>
            <person name="Ohara O."/>
            <person name="Koga H."/>
        </authorList>
    </citation>
    <scope>NUCLEOTIDE SEQUENCE [LARGE SCALE MRNA] (ISOFORM 2)</scope>
    <source>
        <tissue>Embryonic tail</tissue>
    </source>
</reference>
<reference key="2">
    <citation type="journal article" date="2004" name="Genome Res.">
        <title>The status, quality, and expansion of the NIH full-length cDNA project: the Mammalian Gene Collection (MGC).</title>
        <authorList>
            <consortium name="The MGC Project Team"/>
        </authorList>
    </citation>
    <scope>NUCLEOTIDE SEQUENCE [LARGE SCALE MRNA] (ISOFORM 1)</scope>
    <source>
        <strain>FVB/N</strain>
        <tissue>Mammary tumor</tissue>
    </source>
</reference>
<reference key="3">
    <citation type="journal article" date="2004" name="Mol. Cell. Proteomics">
        <title>Phosphoproteomic analysis of the developing mouse brain.</title>
        <authorList>
            <person name="Ballif B.A."/>
            <person name="Villen J."/>
            <person name="Beausoleil S.A."/>
            <person name="Schwartz D."/>
            <person name="Gygi S.P."/>
        </authorList>
    </citation>
    <scope>PHOSPHORYLATION [LARGE SCALE ANALYSIS] AT SER-203</scope>
    <scope>IDENTIFICATION BY MASS SPECTROMETRY [LARGE SCALE ANALYSIS]</scope>
    <source>
        <tissue>Embryonic brain</tissue>
    </source>
</reference>
<reference key="4">
    <citation type="journal article" date="2006" name="J. Cell Biol.">
        <title>Tubulin tyrosination is a major factor affecting the recruitment of CAP-Gly proteins at microtubule plus ends.</title>
        <authorList>
            <person name="Peris L."/>
            <person name="Thery M."/>
            <person name="Faure J."/>
            <person name="Saoudi Y."/>
            <person name="Lafanechere L."/>
            <person name="Chilton J.K."/>
            <person name="Gordon-Weeks P."/>
            <person name="Galjart N."/>
            <person name="Bornens M."/>
            <person name="Wordeman L."/>
            <person name="Wehland J."/>
            <person name="Andrieux A."/>
            <person name="Job D."/>
        </authorList>
    </citation>
    <scope>SUBCELLULAR LOCATION</scope>
    <scope>ASSOCIATION WITH MICROTUBULES</scope>
</reference>
<reference key="5">
    <citation type="journal article" date="2007" name="Proc. Natl. Acad. Sci. U.S.A.">
        <title>Large-scale phosphorylation analysis of mouse liver.</title>
        <authorList>
            <person name="Villen J."/>
            <person name="Beausoleil S.A."/>
            <person name="Gerber S.A."/>
            <person name="Gygi S.P."/>
        </authorList>
    </citation>
    <scope>PHOSPHORYLATION [LARGE SCALE ANALYSIS] AT SER-199 AND SER-203</scope>
    <scope>IDENTIFICATION BY MASS SPECTROMETRY [LARGE SCALE ANALYSIS]</scope>
    <source>
        <tissue>Liver</tissue>
    </source>
</reference>
<reference key="6">
    <citation type="journal article" date="2008" name="Cell">
        <title>ACF7 regulates cytoskeletal-focal adhesion dynamics and migration and has ATPase activity.</title>
        <authorList>
            <person name="Wu X."/>
            <person name="Kodama A."/>
            <person name="Fuchs E."/>
        </authorList>
    </citation>
    <scope>SUBCELLULAR LOCATION</scope>
</reference>
<reference key="7">
    <citation type="journal article" date="2009" name="Mol. Cell. Proteomics">
        <title>Large scale localization of protein phosphorylation by use of electron capture dissociation mass spectrometry.</title>
        <authorList>
            <person name="Sweet S.M."/>
            <person name="Bailey C.M."/>
            <person name="Cunningham D.L."/>
            <person name="Heath J.K."/>
            <person name="Cooper H.J."/>
        </authorList>
    </citation>
    <scope>IDENTIFICATION BY MASS SPECTROMETRY [LARGE SCALE ANALYSIS]</scope>
    <source>
        <tissue>Embryonic fibroblast</tissue>
    </source>
</reference>
<reference key="8">
    <citation type="journal article" date="2010" name="Cell">
        <title>A tissue-specific atlas of mouse protein phosphorylation and expression.</title>
        <authorList>
            <person name="Huttlin E.L."/>
            <person name="Jedrychowski M.P."/>
            <person name="Elias J.E."/>
            <person name="Goswami T."/>
            <person name="Rad R."/>
            <person name="Beausoleil S.A."/>
            <person name="Villen J."/>
            <person name="Haas W."/>
            <person name="Sowa M.E."/>
            <person name="Gygi S.P."/>
        </authorList>
    </citation>
    <scope>PHOSPHORYLATION [LARGE SCALE ANALYSIS] AT SER-194; SER-199; SER-203; SER-314 AND SER-1317</scope>
    <scope>IDENTIFICATION BY MASS SPECTROMETRY [LARGE SCALE ANALYSIS]</scope>
    <source>
        <tissue>Brain</tissue>
        <tissue>Brown adipose tissue</tissue>
        <tissue>Heart</tissue>
        <tissue>Kidney</tissue>
        <tissue>Liver</tissue>
        <tissue>Lung</tissue>
        <tissue>Pancreas</tissue>
        <tissue>Spleen</tissue>
        <tissue>Testis</tissue>
    </source>
</reference>
<reference key="9">
    <citation type="journal article" date="2016" name="Cell Rep.">
        <title>Alpha-tubulin tyrosination and CLIP-170 phosphorylation regulate the initiation of dynein-driven transport in neurons.</title>
        <authorList>
            <person name="Nirschl J.J."/>
            <person name="Magiera M.M."/>
            <person name="Lazarus J.E."/>
            <person name="Janke C."/>
            <person name="Holzbaur E.L."/>
        </authorList>
    </citation>
    <scope>PHOSPHORYLATION</scope>
</reference>
<reference key="10">
    <citation type="journal article" date="2022" name="Front. Cell Dev. Biol.">
        <title>TMPRSS12 Functions in Meiosis and Spermiogenesis and Is Required for Male Fertility in Mice.</title>
        <authorList>
            <person name="Zhang J."/>
            <person name="Zhou X."/>
            <person name="Wan D."/>
            <person name="Yu L."/>
            <person name="Chen X."/>
            <person name="Yan T."/>
            <person name="Wu Z."/>
            <person name="Zheng M."/>
            <person name="Zhu F."/>
            <person name="Zhu H."/>
        </authorList>
    </citation>
    <scope>TISSUE SPECIFICITY</scope>
</reference>
<reference key="11">
    <citation type="submission" date="2005-11" db="PDB data bank">
        <title>Solution structure of the 1st CAP-Gly domain in mouse CLIP-170/Restin.</title>
        <authorList>
            <consortium name="RIKEN structural genomics initiative (RSGI)"/>
        </authorList>
    </citation>
    <scope>STRUCTURE BY NMR OF 58-128</scope>
</reference>
<protein>
    <recommendedName>
        <fullName>CAP-Gly domain-containing linker protein 1</fullName>
    </recommendedName>
    <alternativeName>
        <fullName evidence="10">Cytoplasmic linker protein 170</fullName>
        <shortName evidence="10">CLIP-170</shortName>
    </alternativeName>
    <alternativeName>
        <fullName>Restin</fullName>
    </alternativeName>
</protein>
<name>CLIP1_MOUSE</name>
<proteinExistence type="evidence at protein level"/>
<organism>
    <name type="scientific">Mus musculus</name>
    <name type="common">Mouse</name>
    <dbReference type="NCBI Taxonomy" id="10090"/>
    <lineage>
        <taxon>Eukaryota</taxon>
        <taxon>Metazoa</taxon>
        <taxon>Chordata</taxon>
        <taxon>Craniata</taxon>
        <taxon>Vertebrata</taxon>
        <taxon>Euteleostomi</taxon>
        <taxon>Mammalia</taxon>
        <taxon>Eutheria</taxon>
        <taxon>Euarchontoglires</taxon>
        <taxon>Glires</taxon>
        <taxon>Rodentia</taxon>
        <taxon>Myomorpha</taxon>
        <taxon>Muroidea</taxon>
        <taxon>Muridae</taxon>
        <taxon>Murinae</taxon>
        <taxon>Mus</taxon>
        <taxon>Mus</taxon>
    </lineage>
</organism>
<accession>Q922J3</accession>
<accession>Q571L7</accession>
<feature type="chain" id="PRO_0000240672" description="CAP-Gly domain-containing linker protein 1">
    <location>
        <begin position="1"/>
        <end position="1391"/>
    </location>
</feature>
<feature type="domain" description="CAP-Gly 1" evidence="5">
    <location>
        <begin position="78"/>
        <end position="120"/>
    </location>
</feature>
<feature type="domain" description="CAP-Gly 2" evidence="5">
    <location>
        <begin position="231"/>
        <end position="273"/>
    </location>
</feature>
<feature type="zinc finger region" description="CCHC-type" evidence="2">
    <location>
        <begin position="1370"/>
        <end position="1387"/>
    </location>
</feature>
<feature type="region of interest" description="Disordered" evidence="6">
    <location>
        <begin position="1"/>
        <end position="53"/>
    </location>
</feature>
<feature type="region of interest" description="Important for tubulin binding" evidence="2">
    <location>
        <begin position="97"/>
        <end position="101"/>
    </location>
</feature>
<feature type="region of interest" description="Disordered" evidence="6">
    <location>
        <begin position="129"/>
        <end position="182"/>
    </location>
</feature>
<feature type="region of interest" description="Disordered" evidence="6">
    <location>
        <begin position="302"/>
        <end position="336"/>
    </location>
</feature>
<feature type="region of interest" description="Disordered" evidence="6">
    <location>
        <begin position="1251"/>
        <end position="1272"/>
    </location>
</feature>
<feature type="coiled-coil region" evidence="4">
    <location>
        <begin position="349"/>
        <end position="1306"/>
    </location>
</feature>
<feature type="compositionally biased region" description="Polar residues" evidence="6">
    <location>
        <begin position="146"/>
        <end position="182"/>
    </location>
</feature>
<feature type="compositionally biased region" description="Low complexity" evidence="6">
    <location>
        <begin position="302"/>
        <end position="331"/>
    </location>
</feature>
<feature type="modified residue" description="Phosphoserine" evidence="2">
    <location>
        <position position="48"/>
    </location>
</feature>
<feature type="modified residue" description="Phosphothreonine" evidence="2">
    <location>
        <position position="50"/>
    </location>
</feature>
<feature type="modified residue" description="Phosphoserine" evidence="2">
    <location>
        <position position="146"/>
    </location>
</feature>
<feature type="modified residue" description="Phosphothreonine" evidence="2">
    <location>
        <position position="181"/>
    </location>
</feature>
<feature type="modified residue" description="Phosphoserine" evidence="15">
    <location>
        <position position="194"/>
    </location>
</feature>
<feature type="modified residue" description="Phosphoserine" evidence="2">
    <location>
        <position position="196"/>
    </location>
</feature>
<feature type="modified residue" description="Phosphoserine" evidence="14 15">
    <location>
        <position position="199"/>
    </location>
</feature>
<feature type="modified residue" description="Phosphoserine" evidence="13 14 15">
    <location>
        <position position="203"/>
    </location>
</feature>
<feature type="modified residue" description="Phosphoserine" evidence="3">
    <location>
        <position position="309"/>
    </location>
</feature>
<feature type="modified residue" description="Phosphoserine; by PKA" evidence="3">
    <location>
        <position position="311"/>
    </location>
</feature>
<feature type="modified residue" description="Phosphoserine" evidence="15">
    <location>
        <position position="314"/>
    </location>
</feature>
<feature type="modified residue" description="Phosphoserine" evidence="3">
    <location>
        <position position="347"/>
    </location>
</feature>
<feature type="modified residue" description="Phosphoserine" evidence="3">
    <location>
        <position position="1189"/>
    </location>
</feature>
<feature type="modified residue" description="Phosphoserine" evidence="15">
    <location>
        <position position="1317"/>
    </location>
</feature>
<feature type="splice variant" id="VSP_019425" description="In isoform 2." evidence="11">
    <location>
        <begin position="695"/>
        <end position="770"/>
    </location>
</feature>
<feature type="sequence conflict" description="In Ref. 1; BAD90357." evidence="12" ref="1">
    <original>S</original>
    <variation>F</variation>
    <location>
        <position position="47"/>
    </location>
</feature>
<feature type="strand" evidence="16">
    <location>
        <begin position="63"/>
        <end position="66"/>
    </location>
</feature>
<feature type="strand" evidence="16">
    <location>
        <begin position="71"/>
        <end position="79"/>
    </location>
</feature>
<feature type="strand" evidence="16">
    <location>
        <begin position="81"/>
        <end position="83"/>
    </location>
</feature>
<feature type="strand" evidence="16">
    <location>
        <begin position="85"/>
        <end position="95"/>
    </location>
</feature>
<feature type="strand" evidence="16">
    <location>
        <begin position="97"/>
        <end position="103"/>
    </location>
</feature>
<feature type="strand" evidence="16">
    <location>
        <begin position="116"/>
        <end position="119"/>
    </location>
</feature>
<feature type="helix" evidence="16">
    <location>
        <begin position="121"/>
        <end position="123"/>
    </location>
</feature>
<gene>
    <name type="primary">Clip1</name>
    <name type="synonym">Kiaa4046</name>
    <name type="synonym">Rsn</name>
</gene>
<evidence type="ECO:0000250" key="1"/>
<evidence type="ECO:0000250" key="2">
    <source>
        <dbReference type="UniProtKB" id="P30622"/>
    </source>
</evidence>
<evidence type="ECO:0000250" key="3">
    <source>
        <dbReference type="UniProtKB" id="Q9JK25"/>
    </source>
</evidence>
<evidence type="ECO:0000255" key="4"/>
<evidence type="ECO:0000255" key="5">
    <source>
        <dbReference type="PROSITE-ProRule" id="PRU00045"/>
    </source>
</evidence>
<evidence type="ECO:0000256" key="6">
    <source>
        <dbReference type="SAM" id="MobiDB-lite"/>
    </source>
</evidence>
<evidence type="ECO:0000269" key="7">
    <source>
    </source>
</evidence>
<evidence type="ECO:0000269" key="8">
    <source>
    </source>
</evidence>
<evidence type="ECO:0000269" key="9">
    <source>
    </source>
</evidence>
<evidence type="ECO:0000303" key="10">
    <source>
    </source>
</evidence>
<evidence type="ECO:0000303" key="11">
    <source ref="1"/>
</evidence>
<evidence type="ECO:0000305" key="12"/>
<evidence type="ECO:0007744" key="13">
    <source>
    </source>
</evidence>
<evidence type="ECO:0007744" key="14">
    <source>
    </source>
</evidence>
<evidence type="ECO:0007744" key="15">
    <source>
    </source>
</evidence>
<evidence type="ECO:0007829" key="16">
    <source>
        <dbReference type="PDB" id="2CP7"/>
    </source>
</evidence>
<sequence>MSMLKPSGLKAPTKILKPGSTALKTPAAAAAPVEKTIPSEKASGPPSSETQEEFVDDFRVGERVWVNGNKPGFIQFLGETQFAPGQWAGIVLDEPIGKNDGSVAGVRYFQCEPLKGIFTRPSKLTRKVQAEDEANGLQAAPGRTASPLSTAAATMVSSSPATPSNIPHKPSQSTAKEPSATPQISNLTKTASESISNLSEAGSVKKGERELKVGDRVLVGGTKAGVVRFLGETDFAKGEWCGVELDEPLGKNDGAVAGTRYFQCQPKYGLFAPVHKVTKIGFPSTTPAKAKAAAVRRVMAATPASLKRSPSASSLSSMSSVASSVSSKPSRTGLLTETSSRYARKISGTTALQEALKEKQQHIEQLLAERDLERAEVAKATSHVGEIEQELALARDGHDQHVLELEAKMDQLRTMVEAADREKVELLNQLEEEKRKVEDLQFRVEEESITKGDLEVATVSEKSRIMELEKDLALRAQEVAELRRRLESSKPPGDVDMSLSLLQEISALQEKLEAIHTDHQGEMTSLKEHFGAREEAFQKEIKALHTATEKLSKENESLRSKLDHANKENSDVIALWKSKLETAIASHQQAMEELKVSFSKGIGTDSAEFAELKTQIERLRLDYQHEIESLQSKQDSERSAHAKEMETMQAKLMKIIKEKEDSLEAVKARLDSAEDQHLVEMEDTLNKLQEAEIKVKELEVLQAKYTEQSEVIGNFTSQLSAVKEKLLDLDALRKANSEGKLELETLRQQLEGAEKQIKNLETERNAESSKANSITKELQEKELVLTGLQDSLNQVNQVKETLEKELQTLKEKFASTSEEAVSAQTRMQDTVNKLHQKEEQFNVLSSELEKLRENLTDMEAKFKEKDDREDQLVKAKEKLENDIAEIMKMSGDNSSQLTKMNDELRLKERSVEELQLKLTKANENASFLQKSIGEVTLKAEQSQQQAARKHEEEKKELEEKLLELEKKMETSYNQCQDLKAKYEKASSETKTKHEEILQNLQKMLADTEDKLKAAQEANRDLMQDMEELKTQADKAKAAQTAEDAMQIMEQMTKEKTETLASLEDTKQTNARLQNELDTLKENNLKTVEELNKSKELLSVENQKMEEFKKEIETLKQAAAQKSQQLSALQEENVKLAEELGRTRDEVTSHQKLEEERSVLNNQLLEMKKRESEFRKDADEEKASLQKSISLTSALLTEKDAELEKLRNEVTVLRGENATAKSLHSVVQTLESDKVKLELKVKNLELQLKENKRQLSSSSGNTDAQAEEDERAQESQIDFLNSVIVDLQRKNQDLKMKVEMMSEAALNGNGEDLNSYDSDDQEKQSKKKPRLFCDICDCFDLHDTEDCPTQAQMSEDPPHSTHHGSRSEERPYCEICEMFGHWATNCNDDETF</sequence>
<dbReference type="EMBL" id="AK220172">
    <property type="protein sequence ID" value="BAD90357.1"/>
    <property type="status" value="ALT_INIT"/>
    <property type="molecule type" value="mRNA"/>
</dbReference>
<dbReference type="EMBL" id="BC007191">
    <property type="protein sequence ID" value="AAH07191.1"/>
    <property type="molecule type" value="mRNA"/>
</dbReference>
<dbReference type="CCDS" id="CCDS19667.1">
    <molecule id="Q922J3-1"/>
</dbReference>
<dbReference type="CCDS" id="CCDS71663.1">
    <molecule id="Q922J3-2"/>
</dbReference>
<dbReference type="RefSeq" id="NP_001278158.1">
    <molecule id="Q922J3-2"/>
    <property type="nucleotide sequence ID" value="NM_001291229.2"/>
</dbReference>
<dbReference type="RefSeq" id="NP_062739.2">
    <molecule id="Q922J3-1"/>
    <property type="nucleotide sequence ID" value="NM_019765.5"/>
</dbReference>
<dbReference type="PDB" id="2CP7">
    <property type="method" value="NMR"/>
    <property type="chains" value="A=58-128"/>
</dbReference>
<dbReference type="PDBsum" id="2CP7"/>
<dbReference type="SMR" id="Q922J3"/>
<dbReference type="BioGRID" id="207974">
    <property type="interactions" value="19"/>
</dbReference>
<dbReference type="FunCoup" id="Q922J3">
    <property type="interactions" value="1897"/>
</dbReference>
<dbReference type="IntAct" id="Q922J3">
    <property type="interactions" value="5"/>
</dbReference>
<dbReference type="MINT" id="Q922J3"/>
<dbReference type="STRING" id="10090.ENSMUSP00000107192"/>
<dbReference type="GlyGen" id="Q922J3">
    <property type="glycosylation" value="4 sites, 1 N-linked glycan (1 site), 1 O-linked glycan (2 sites)"/>
</dbReference>
<dbReference type="iPTMnet" id="Q922J3"/>
<dbReference type="PhosphoSitePlus" id="Q922J3"/>
<dbReference type="jPOST" id="Q922J3"/>
<dbReference type="PaxDb" id="10090-ENSMUSP00000107192"/>
<dbReference type="PeptideAtlas" id="Q922J3"/>
<dbReference type="ProteomicsDB" id="281684">
    <molecule id="Q922J3-1"/>
</dbReference>
<dbReference type="ProteomicsDB" id="281685">
    <molecule id="Q922J3-2"/>
</dbReference>
<dbReference type="Pumba" id="Q922J3"/>
<dbReference type="Antibodypedia" id="3829">
    <property type="antibodies" value="317 antibodies from 41 providers"/>
</dbReference>
<dbReference type="DNASU" id="56430"/>
<dbReference type="Ensembl" id="ENSMUST00000111564.8">
    <molecule id="Q922J3-2"/>
    <property type="protein sequence ID" value="ENSMUSP00000107190.2"/>
    <property type="gene ID" value="ENSMUSG00000049550.18"/>
</dbReference>
<dbReference type="Ensembl" id="ENSMUST00000111566.9">
    <molecule id="Q922J3-1"/>
    <property type="protein sequence ID" value="ENSMUSP00000107192.3"/>
    <property type="gene ID" value="ENSMUSG00000049550.18"/>
</dbReference>
<dbReference type="GeneID" id="56430"/>
<dbReference type="KEGG" id="mmu:56430"/>
<dbReference type="UCSC" id="uc008zoa.2">
    <molecule id="Q922J3-1"/>
    <property type="organism name" value="mouse"/>
</dbReference>
<dbReference type="UCSC" id="uc008zob.2">
    <molecule id="Q922J3-2"/>
    <property type="organism name" value="mouse"/>
</dbReference>
<dbReference type="AGR" id="MGI:1928401"/>
<dbReference type="CTD" id="6249"/>
<dbReference type="MGI" id="MGI:1928401">
    <property type="gene designation" value="Clip1"/>
</dbReference>
<dbReference type="VEuPathDB" id="HostDB:ENSMUSG00000049550"/>
<dbReference type="eggNOG" id="KOG4568">
    <property type="taxonomic scope" value="Eukaryota"/>
</dbReference>
<dbReference type="GeneTree" id="ENSGT00940000155122"/>
<dbReference type="InParanoid" id="Q922J3"/>
<dbReference type="OrthoDB" id="5412539at2759"/>
<dbReference type="PhylomeDB" id="Q922J3"/>
<dbReference type="TreeFam" id="TF326096"/>
<dbReference type="Reactome" id="R-MMU-141444">
    <property type="pathway name" value="Amplification of signal from unattached kinetochores via a MAD2 inhibitory signal"/>
</dbReference>
<dbReference type="Reactome" id="R-MMU-2467813">
    <property type="pathway name" value="Separation of Sister Chromatids"/>
</dbReference>
<dbReference type="Reactome" id="R-MMU-2500257">
    <property type="pathway name" value="Resolution of Sister Chromatid Cohesion"/>
</dbReference>
<dbReference type="Reactome" id="R-MMU-5626467">
    <property type="pathway name" value="RHO GTPases activate IQGAPs"/>
</dbReference>
<dbReference type="Reactome" id="R-MMU-5663220">
    <property type="pathway name" value="RHO GTPases Activate Formins"/>
</dbReference>
<dbReference type="Reactome" id="R-MMU-68877">
    <property type="pathway name" value="Mitotic Prometaphase"/>
</dbReference>
<dbReference type="Reactome" id="R-MMU-9648025">
    <property type="pathway name" value="EML4 and NUDC in mitotic spindle formation"/>
</dbReference>
<dbReference type="BioGRID-ORCS" id="56430">
    <property type="hits" value="4 hits in 77 CRISPR screens"/>
</dbReference>
<dbReference type="CD-CODE" id="CE726F99">
    <property type="entry name" value="Postsynaptic density"/>
</dbReference>
<dbReference type="ChiTaRS" id="Clip1">
    <property type="organism name" value="mouse"/>
</dbReference>
<dbReference type="EvolutionaryTrace" id="Q922J3"/>
<dbReference type="PRO" id="PR:Q922J3"/>
<dbReference type="Proteomes" id="UP000000589">
    <property type="component" value="Chromosome 5"/>
</dbReference>
<dbReference type="RNAct" id="Q922J3">
    <property type="molecule type" value="protein"/>
</dbReference>
<dbReference type="Bgee" id="ENSMUSG00000049550">
    <property type="expression patterns" value="Expressed in vastus lateralis and 260 other cell types or tissues"/>
</dbReference>
<dbReference type="ExpressionAtlas" id="Q922J3">
    <property type="expression patterns" value="baseline and differential"/>
</dbReference>
<dbReference type="GO" id="GO:0030659">
    <property type="term" value="C:cytoplasmic vesicle membrane"/>
    <property type="evidence" value="ECO:0007669"/>
    <property type="project" value="UniProtKB-SubCell"/>
</dbReference>
<dbReference type="GO" id="GO:0005874">
    <property type="term" value="C:microtubule"/>
    <property type="evidence" value="ECO:0000314"/>
    <property type="project" value="UniProtKB"/>
</dbReference>
<dbReference type="GO" id="GO:0015630">
    <property type="term" value="C:microtubule cytoskeleton"/>
    <property type="evidence" value="ECO:0000314"/>
    <property type="project" value="MGI"/>
</dbReference>
<dbReference type="GO" id="GO:0035371">
    <property type="term" value="C:microtubule plus-end"/>
    <property type="evidence" value="ECO:0000314"/>
    <property type="project" value="UniProtKB"/>
</dbReference>
<dbReference type="GO" id="GO:0005635">
    <property type="term" value="C:nuclear envelope"/>
    <property type="evidence" value="ECO:0000314"/>
    <property type="project" value="WormBase"/>
</dbReference>
<dbReference type="GO" id="GO:0001726">
    <property type="term" value="C:ruffle"/>
    <property type="evidence" value="ECO:0007669"/>
    <property type="project" value="UniProtKB-SubCell"/>
</dbReference>
<dbReference type="GO" id="GO:0008017">
    <property type="term" value="F:microtubule binding"/>
    <property type="evidence" value="ECO:0000314"/>
    <property type="project" value="UniProtKB"/>
</dbReference>
<dbReference type="GO" id="GO:0051010">
    <property type="term" value="F:microtubule plus-end binding"/>
    <property type="evidence" value="ECO:0000314"/>
    <property type="project" value="MGI"/>
</dbReference>
<dbReference type="GO" id="GO:0015631">
    <property type="term" value="F:tubulin binding"/>
    <property type="evidence" value="ECO:0000250"/>
    <property type="project" value="UniProtKB"/>
</dbReference>
<dbReference type="GO" id="GO:0008270">
    <property type="term" value="F:zinc ion binding"/>
    <property type="evidence" value="ECO:0000250"/>
    <property type="project" value="UniProtKB"/>
</dbReference>
<dbReference type="GO" id="GO:0001578">
    <property type="term" value="P:microtubule bundle formation"/>
    <property type="evidence" value="ECO:0000250"/>
    <property type="project" value="UniProtKB"/>
</dbReference>
<dbReference type="GO" id="GO:0031116">
    <property type="term" value="P:positive regulation of microtubule polymerization"/>
    <property type="evidence" value="ECO:0000250"/>
    <property type="project" value="UniProtKB"/>
</dbReference>
<dbReference type="GO" id="GO:0044861">
    <property type="term" value="P:protein transport into plasma membrane raft"/>
    <property type="evidence" value="ECO:0000315"/>
    <property type="project" value="MGI"/>
</dbReference>
<dbReference type="FunFam" id="2.30.30.190:FF:000002">
    <property type="entry name" value="CAP-Gly domain containing linker protein 1"/>
    <property type="match status" value="1"/>
</dbReference>
<dbReference type="FunFam" id="2.30.30.190:FF:000001">
    <property type="entry name" value="Putative CAP-Gly domain-containing linker protein 1"/>
    <property type="match status" value="1"/>
</dbReference>
<dbReference type="Gene3D" id="2.30.30.190">
    <property type="entry name" value="CAP Gly-rich-like domain"/>
    <property type="match status" value="2"/>
</dbReference>
<dbReference type="Gene3D" id="1.20.5.1160">
    <property type="entry name" value="Vasodilator-stimulated phosphoprotein"/>
    <property type="match status" value="1"/>
</dbReference>
<dbReference type="InterPro" id="IPR036859">
    <property type="entry name" value="CAP-Gly_dom_sf"/>
</dbReference>
<dbReference type="InterPro" id="IPR000938">
    <property type="entry name" value="CAP-Gly_domain"/>
</dbReference>
<dbReference type="InterPro" id="IPR032108">
    <property type="entry name" value="CLIP1_ZNF"/>
</dbReference>
<dbReference type="PANTHER" id="PTHR18916:SF44">
    <property type="entry name" value="CAP-GLY DOMAIN-CONTAINING LINKER PROTEIN 1"/>
    <property type="match status" value="1"/>
</dbReference>
<dbReference type="PANTHER" id="PTHR18916">
    <property type="entry name" value="DYNACTIN 1-RELATED MICROTUBULE-BINDING"/>
    <property type="match status" value="1"/>
</dbReference>
<dbReference type="Pfam" id="PF01302">
    <property type="entry name" value="CAP_GLY"/>
    <property type="match status" value="2"/>
</dbReference>
<dbReference type="Pfam" id="PF16641">
    <property type="entry name" value="CLIP1_ZNF"/>
    <property type="match status" value="2"/>
</dbReference>
<dbReference type="SMART" id="SM01052">
    <property type="entry name" value="CAP_GLY"/>
    <property type="match status" value="2"/>
</dbReference>
<dbReference type="SUPFAM" id="SSF74924">
    <property type="entry name" value="Cap-Gly domain"/>
    <property type="match status" value="2"/>
</dbReference>
<dbReference type="PROSITE" id="PS00845">
    <property type="entry name" value="CAP_GLY_1"/>
    <property type="match status" value="2"/>
</dbReference>
<dbReference type="PROSITE" id="PS50245">
    <property type="entry name" value="CAP_GLY_2"/>
    <property type="match status" value="2"/>
</dbReference>
<comment type="function">
    <text evidence="2">Binds to the plus end of microtubules and regulates the dynamics of the microtubule cytoskeleton. Promotes microtubule growth and microtubule bundling. Links cytoplasmic vesicles to microtubules and thereby plays an important role in intracellular vesicle trafficking. Plays a role macropinocytosis and endosome trafficking.</text>
</comment>
<comment type="subunit">
    <text evidence="2 7">Interacts with MTOR; phosphorylates and regulates CLIP1. Interacts (via CAP-Gly domains) with tubulin. Interacts with SLAIN2. Interacts with TUBA1B, MAPRE1 and MAPRE3. Interacts (via zinc finger) with DCTN1 (By similarity). Binds preferentially to tyrosinated microtubules, and only marginally to detyrosinated microtubules (PubMed:16954346).</text>
</comment>
<comment type="subcellular location">
    <subcellularLocation>
        <location evidence="2">Cytoplasm</location>
    </subcellularLocation>
    <subcellularLocation>
        <location evidence="7">Cytoplasm</location>
        <location evidence="7">Cytoskeleton</location>
    </subcellularLocation>
    <subcellularLocation>
        <location evidence="2">Cytoplasmic vesicle membrane</location>
        <topology evidence="1">Peripheral membrane protein</topology>
        <orientation evidence="1">Cytoplasmic side</orientation>
    </subcellularLocation>
    <subcellularLocation>
        <location evidence="2">Cell projection</location>
        <location evidence="2">Ruffle</location>
    </subcellularLocation>
    <text evidence="2 7">Localizes to microtubule plus ends. Localizes preferentially to the ends of tyrosinated microtubules (PubMed:16954346). Accumulates in plasma membrane regions with ruffling and protrusions. Associates with the membranes of intermediate macropinocytic vesicles (By similarity).</text>
</comment>
<comment type="alternative products">
    <event type="alternative splicing"/>
    <isoform>
        <id>Q922J3-1</id>
        <name>1</name>
        <sequence type="displayed"/>
    </isoform>
    <isoform>
        <id>Q922J3-2</id>
        <name>2</name>
        <sequence type="described" ref="VSP_019425"/>
    </isoform>
</comment>
<comment type="tissue specificity">
    <text evidence="9">Expressed in the testes (at protein level).</text>
</comment>
<comment type="domain">
    <text evidence="2">Intramolecular interaction between the zinc finger domain and the CAP-Gly domains may inhibit interaction with tubulin.</text>
</comment>
<comment type="PTM">
    <text evidence="2 3 8">Phosphorylated (PubMed:26972003). Phosphorylation induces conformational changes by increasing the affinity of the N-terminus for C-terminus, resulting in inhibition of its function thus decreasing its binding to microtubules and DCTN1. Exhibits a folded, autoinhibited conformation when phosphorylated and an open conformation when dephosphorylated with increased binding affinity to microtubules and DCTN1. Phosphorylation regulates its recruitment to tyrosinated microtubules and the recruitment of vesicular cargo to microtubules in neurons. Phosphorylation by MTOR may positively regulate CLIP1 association with microtubules (By similarity).</text>
</comment>
<comment type="sequence caution" evidence="12">
    <conflict type="erroneous initiation">
        <sequence resource="EMBL-CDS" id="BAD90357"/>
    </conflict>
</comment>